<protein>
    <recommendedName>
        <fullName>PRADC1-like protein</fullName>
    </recommendedName>
    <alternativeName>
        <fullName>PAP21-like protein</fullName>
    </alternativeName>
</protein>
<gene>
    <name type="ORF">CG9849</name>
</gene>
<accession>Q9W1W9</accession>
<name>PADC1_DROME</name>
<sequence>MLIAWLVLAATLSRSIRASTTISIPITTQDIIAGDVFFEILSPSELEYTYRLRPAKDFGSAFSERLEGVPLVITDPPGACQEIRNARDLNGGVALIDRGECSFLTKTLRAEAAGALAAIITEYNPSSPEFEHYIEMIHDNSQQDANIPAGFLLGKNGVIIRSTLQRLKRVHALINIPVNLTFTPPSKINHPPWLGW</sequence>
<organism>
    <name type="scientific">Drosophila melanogaster</name>
    <name type="common">Fruit fly</name>
    <dbReference type="NCBI Taxonomy" id="7227"/>
    <lineage>
        <taxon>Eukaryota</taxon>
        <taxon>Metazoa</taxon>
        <taxon>Ecdysozoa</taxon>
        <taxon>Arthropoda</taxon>
        <taxon>Hexapoda</taxon>
        <taxon>Insecta</taxon>
        <taxon>Pterygota</taxon>
        <taxon>Neoptera</taxon>
        <taxon>Endopterygota</taxon>
        <taxon>Diptera</taxon>
        <taxon>Brachycera</taxon>
        <taxon>Muscomorpha</taxon>
        <taxon>Ephydroidea</taxon>
        <taxon>Drosophilidae</taxon>
        <taxon>Drosophila</taxon>
        <taxon>Sophophora</taxon>
    </lineage>
</organism>
<comment type="function">
    <text evidence="3">May be involved in iversification of muscle cell fates.</text>
</comment>
<comment type="subcellular location">
    <subcellularLocation>
        <location evidence="1">Secreted</location>
    </subcellularLocation>
</comment>
<reference key="1">
    <citation type="journal article" date="2000" name="Science">
        <title>The genome sequence of Drosophila melanogaster.</title>
        <authorList>
            <person name="Adams M.D."/>
            <person name="Celniker S.E."/>
            <person name="Holt R.A."/>
            <person name="Evans C.A."/>
            <person name="Gocayne J.D."/>
            <person name="Amanatides P.G."/>
            <person name="Scherer S.E."/>
            <person name="Li P.W."/>
            <person name="Hoskins R.A."/>
            <person name="Galle R.F."/>
            <person name="George R.A."/>
            <person name="Lewis S.E."/>
            <person name="Richards S."/>
            <person name="Ashburner M."/>
            <person name="Henderson S.N."/>
            <person name="Sutton G.G."/>
            <person name="Wortman J.R."/>
            <person name="Yandell M.D."/>
            <person name="Zhang Q."/>
            <person name="Chen L.X."/>
            <person name="Brandon R.C."/>
            <person name="Rogers Y.-H.C."/>
            <person name="Blazej R.G."/>
            <person name="Champe M."/>
            <person name="Pfeiffer B.D."/>
            <person name="Wan K.H."/>
            <person name="Doyle C."/>
            <person name="Baxter E.G."/>
            <person name="Helt G."/>
            <person name="Nelson C.R."/>
            <person name="Miklos G.L.G."/>
            <person name="Abril J.F."/>
            <person name="Agbayani A."/>
            <person name="An H.-J."/>
            <person name="Andrews-Pfannkoch C."/>
            <person name="Baldwin D."/>
            <person name="Ballew R.M."/>
            <person name="Basu A."/>
            <person name="Baxendale J."/>
            <person name="Bayraktaroglu L."/>
            <person name="Beasley E.M."/>
            <person name="Beeson K.Y."/>
            <person name="Benos P.V."/>
            <person name="Berman B.P."/>
            <person name="Bhandari D."/>
            <person name="Bolshakov S."/>
            <person name="Borkova D."/>
            <person name="Botchan M.R."/>
            <person name="Bouck J."/>
            <person name="Brokstein P."/>
            <person name="Brottier P."/>
            <person name="Burtis K.C."/>
            <person name="Busam D.A."/>
            <person name="Butler H."/>
            <person name="Cadieu E."/>
            <person name="Center A."/>
            <person name="Chandra I."/>
            <person name="Cherry J.M."/>
            <person name="Cawley S."/>
            <person name="Dahlke C."/>
            <person name="Davenport L.B."/>
            <person name="Davies P."/>
            <person name="de Pablos B."/>
            <person name="Delcher A."/>
            <person name="Deng Z."/>
            <person name="Mays A.D."/>
            <person name="Dew I."/>
            <person name="Dietz S.M."/>
            <person name="Dodson K."/>
            <person name="Doup L.E."/>
            <person name="Downes M."/>
            <person name="Dugan-Rocha S."/>
            <person name="Dunkov B.C."/>
            <person name="Dunn P."/>
            <person name="Durbin K.J."/>
            <person name="Evangelista C.C."/>
            <person name="Ferraz C."/>
            <person name="Ferriera S."/>
            <person name="Fleischmann W."/>
            <person name="Fosler C."/>
            <person name="Gabrielian A.E."/>
            <person name="Garg N.S."/>
            <person name="Gelbart W.M."/>
            <person name="Glasser K."/>
            <person name="Glodek A."/>
            <person name="Gong F."/>
            <person name="Gorrell J.H."/>
            <person name="Gu Z."/>
            <person name="Guan P."/>
            <person name="Harris M."/>
            <person name="Harris N.L."/>
            <person name="Harvey D.A."/>
            <person name="Heiman T.J."/>
            <person name="Hernandez J.R."/>
            <person name="Houck J."/>
            <person name="Hostin D."/>
            <person name="Houston K.A."/>
            <person name="Howland T.J."/>
            <person name="Wei M.-H."/>
            <person name="Ibegwam C."/>
            <person name="Jalali M."/>
            <person name="Kalush F."/>
            <person name="Karpen G.H."/>
            <person name="Ke Z."/>
            <person name="Kennison J.A."/>
            <person name="Ketchum K.A."/>
            <person name="Kimmel B.E."/>
            <person name="Kodira C.D."/>
            <person name="Kraft C.L."/>
            <person name="Kravitz S."/>
            <person name="Kulp D."/>
            <person name="Lai Z."/>
            <person name="Lasko P."/>
            <person name="Lei Y."/>
            <person name="Levitsky A.A."/>
            <person name="Li J.H."/>
            <person name="Li Z."/>
            <person name="Liang Y."/>
            <person name="Lin X."/>
            <person name="Liu X."/>
            <person name="Mattei B."/>
            <person name="McIntosh T.C."/>
            <person name="McLeod M.P."/>
            <person name="McPherson D."/>
            <person name="Merkulov G."/>
            <person name="Milshina N.V."/>
            <person name="Mobarry C."/>
            <person name="Morris J."/>
            <person name="Moshrefi A."/>
            <person name="Mount S.M."/>
            <person name="Moy M."/>
            <person name="Murphy B."/>
            <person name="Murphy L."/>
            <person name="Muzny D.M."/>
            <person name="Nelson D.L."/>
            <person name="Nelson D.R."/>
            <person name="Nelson K.A."/>
            <person name="Nixon K."/>
            <person name="Nusskern D.R."/>
            <person name="Pacleb J.M."/>
            <person name="Palazzolo M."/>
            <person name="Pittman G.S."/>
            <person name="Pan S."/>
            <person name="Pollard J."/>
            <person name="Puri V."/>
            <person name="Reese M.G."/>
            <person name="Reinert K."/>
            <person name="Remington K."/>
            <person name="Saunders R.D.C."/>
            <person name="Scheeler F."/>
            <person name="Shen H."/>
            <person name="Shue B.C."/>
            <person name="Siden-Kiamos I."/>
            <person name="Simpson M."/>
            <person name="Skupski M.P."/>
            <person name="Smith T.J."/>
            <person name="Spier E."/>
            <person name="Spradling A.C."/>
            <person name="Stapleton M."/>
            <person name="Strong R."/>
            <person name="Sun E."/>
            <person name="Svirskas R."/>
            <person name="Tector C."/>
            <person name="Turner R."/>
            <person name="Venter E."/>
            <person name="Wang A.H."/>
            <person name="Wang X."/>
            <person name="Wang Z.-Y."/>
            <person name="Wassarman D.A."/>
            <person name="Weinstock G.M."/>
            <person name="Weissenbach J."/>
            <person name="Williams S.M."/>
            <person name="Woodage T."/>
            <person name="Worley K.C."/>
            <person name="Wu D."/>
            <person name="Yang S."/>
            <person name="Yao Q.A."/>
            <person name="Ye J."/>
            <person name="Yeh R.-F."/>
            <person name="Zaveri J.S."/>
            <person name="Zhan M."/>
            <person name="Zhang G."/>
            <person name="Zhao Q."/>
            <person name="Zheng L."/>
            <person name="Zheng X.H."/>
            <person name="Zhong F.N."/>
            <person name="Zhong W."/>
            <person name="Zhou X."/>
            <person name="Zhu S.C."/>
            <person name="Zhu X."/>
            <person name="Smith H.O."/>
            <person name="Gibbs R.A."/>
            <person name="Myers E.W."/>
            <person name="Rubin G.M."/>
            <person name="Venter J.C."/>
        </authorList>
    </citation>
    <scope>NUCLEOTIDE SEQUENCE [LARGE SCALE GENOMIC DNA]</scope>
    <source>
        <strain>Berkeley</strain>
    </source>
</reference>
<reference key="2">
    <citation type="journal article" date="2002" name="Genome Biol.">
        <title>Annotation of the Drosophila melanogaster euchromatic genome: a systematic review.</title>
        <authorList>
            <person name="Misra S."/>
            <person name="Crosby M.A."/>
            <person name="Mungall C.J."/>
            <person name="Matthews B.B."/>
            <person name="Campbell K.S."/>
            <person name="Hradecky P."/>
            <person name="Huang Y."/>
            <person name="Kaminker J.S."/>
            <person name="Millburn G.H."/>
            <person name="Prochnik S.E."/>
            <person name="Smith C.D."/>
            <person name="Tupy J.L."/>
            <person name="Whitfield E.J."/>
            <person name="Bayraktaroglu L."/>
            <person name="Berman B.P."/>
            <person name="Bettencourt B.R."/>
            <person name="Celniker S.E."/>
            <person name="de Grey A.D.N.J."/>
            <person name="Drysdale R.A."/>
            <person name="Harris N.L."/>
            <person name="Richter J."/>
            <person name="Russo S."/>
            <person name="Schroeder A.J."/>
            <person name="Shu S.Q."/>
            <person name="Stapleton M."/>
            <person name="Yamada C."/>
            <person name="Ashburner M."/>
            <person name="Gelbart W.M."/>
            <person name="Rubin G.M."/>
            <person name="Lewis S.E."/>
        </authorList>
    </citation>
    <scope>GENOME REANNOTATION</scope>
    <source>
        <strain>Berkeley</strain>
    </source>
</reference>
<reference key="3">
    <citation type="journal article" date="2002" name="Genome Biol.">
        <title>A Drosophila full-length cDNA resource.</title>
        <authorList>
            <person name="Stapleton M."/>
            <person name="Carlson J.W."/>
            <person name="Brokstein P."/>
            <person name="Yu C."/>
            <person name="Champe M."/>
            <person name="George R.A."/>
            <person name="Guarin H."/>
            <person name="Kronmiller B."/>
            <person name="Pacleb J.M."/>
            <person name="Park S."/>
            <person name="Wan K.H."/>
            <person name="Rubin G.M."/>
            <person name="Celniker S.E."/>
        </authorList>
    </citation>
    <scope>NUCLEOTIDE SEQUENCE [LARGE SCALE MRNA]</scope>
    <source>
        <strain>Berkeley</strain>
        <tissue>Embryo</tissue>
    </source>
</reference>
<reference key="4">
    <citation type="journal article" date="2003" name="Mech. Dev.">
        <title>Modifiers of muscle and heart cell fate specification identified by gain-of-function screen in Drosophila.</title>
        <authorList>
            <person name="Bidet Y."/>
            <person name="Jagla T."/>
            <person name="Da Ponte J.-P."/>
            <person name="Dastugue B."/>
            <person name="Jagla K."/>
        </authorList>
    </citation>
    <scope>POSSIBLE FUNCTION</scope>
</reference>
<dbReference type="EMBL" id="AE013599">
    <property type="protein sequence ID" value="AAF46933.1"/>
    <property type="molecule type" value="Genomic_DNA"/>
</dbReference>
<dbReference type="EMBL" id="AY071051">
    <property type="protein sequence ID" value="AAL48673.1"/>
    <property type="molecule type" value="mRNA"/>
</dbReference>
<dbReference type="RefSeq" id="NP_001188993.1">
    <property type="nucleotide sequence ID" value="NM_001202064.2"/>
</dbReference>
<dbReference type="RefSeq" id="NP_611740.1">
    <property type="nucleotide sequence ID" value="NM_137896.3"/>
</dbReference>
<dbReference type="SMR" id="Q9W1W9"/>
<dbReference type="FunCoup" id="Q9W1W9">
    <property type="interactions" value="66"/>
</dbReference>
<dbReference type="IntAct" id="Q9W1W9">
    <property type="interactions" value="5"/>
</dbReference>
<dbReference type="GlyGen" id="Q9W1W9">
    <property type="glycosylation" value="1 site"/>
</dbReference>
<dbReference type="PaxDb" id="7227-FBpp0071862"/>
<dbReference type="DNASU" id="37647"/>
<dbReference type="EnsemblMetazoa" id="FBtr0071951">
    <property type="protein sequence ID" value="FBpp0071862"/>
    <property type="gene ID" value="FBgn0034803"/>
</dbReference>
<dbReference type="EnsemblMetazoa" id="FBtr0302895">
    <property type="protein sequence ID" value="FBpp0292026"/>
    <property type="gene ID" value="FBgn0034803"/>
</dbReference>
<dbReference type="GeneID" id="37647"/>
<dbReference type="KEGG" id="dme:Dmel_CG9849"/>
<dbReference type="UCSC" id="CG9849-RA">
    <property type="organism name" value="d. melanogaster"/>
</dbReference>
<dbReference type="AGR" id="FB:FBgn0034803"/>
<dbReference type="FlyBase" id="FBgn0034803">
    <property type="gene designation" value="CG9849"/>
</dbReference>
<dbReference type="VEuPathDB" id="VectorBase:FBgn0034803"/>
<dbReference type="eggNOG" id="KOG3920">
    <property type="taxonomic scope" value="Eukaryota"/>
</dbReference>
<dbReference type="GeneTree" id="ENSGT00390000009837"/>
<dbReference type="HOGENOM" id="CLU_084006_2_0_1"/>
<dbReference type="InParanoid" id="Q9W1W9"/>
<dbReference type="OMA" id="LMDRGEC"/>
<dbReference type="OrthoDB" id="206201at2759"/>
<dbReference type="PhylomeDB" id="Q9W1W9"/>
<dbReference type="BioGRID-ORCS" id="37647">
    <property type="hits" value="0 hits in 1 CRISPR screen"/>
</dbReference>
<dbReference type="GenomeRNAi" id="37647"/>
<dbReference type="PRO" id="PR:Q9W1W9"/>
<dbReference type="Proteomes" id="UP000000803">
    <property type="component" value="Chromosome 2R"/>
</dbReference>
<dbReference type="Bgee" id="FBgn0034803">
    <property type="expression patterns" value="Expressed in spermathecum and 103 other cell types or tissues"/>
</dbReference>
<dbReference type="ExpressionAtlas" id="Q9W1W9">
    <property type="expression patterns" value="baseline and differential"/>
</dbReference>
<dbReference type="GO" id="GO:0005576">
    <property type="term" value="C:extracellular region"/>
    <property type="evidence" value="ECO:0000250"/>
    <property type="project" value="UniProtKB"/>
</dbReference>
<dbReference type="GO" id="GO:0007521">
    <property type="term" value="P:muscle cell fate determination"/>
    <property type="evidence" value="ECO:0000315"/>
    <property type="project" value="UniProtKB"/>
</dbReference>
<dbReference type="CDD" id="cd02127">
    <property type="entry name" value="PA_hPAP21_like"/>
    <property type="match status" value="1"/>
</dbReference>
<dbReference type="FunFam" id="3.50.30.30:FF:000017">
    <property type="entry name" value="Protease-associated domain-containing protein 1"/>
    <property type="match status" value="1"/>
</dbReference>
<dbReference type="Gene3D" id="3.50.30.30">
    <property type="match status" value="1"/>
</dbReference>
<dbReference type="InterPro" id="IPR046450">
    <property type="entry name" value="PA_dom_sf"/>
</dbReference>
<dbReference type="InterPro" id="IPR003137">
    <property type="entry name" value="PA_domain"/>
</dbReference>
<dbReference type="InterPro" id="IPR037323">
    <property type="entry name" value="PRADC1-like_PA"/>
</dbReference>
<dbReference type="PANTHER" id="PTHR22702">
    <property type="entry name" value="PROTEASE-ASSOCIATED DOMAIN-CONTAINING PROTEIN"/>
    <property type="match status" value="1"/>
</dbReference>
<dbReference type="PANTHER" id="PTHR22702:SF1">
    <property type="entry name" value="PROTEASE-ASSOCIATED DOMAIN-CONTAINING PROTEIN 1"/>
    <property type="match status" value="1"/>
</dbReference>
<dbReference type="Pfam" id="PF02225">
    <property type="entry name" value="PA"/>
    <property type="match status" value="1"/>
</dbReference>
<dbReference type="SUPFAM" id="SSF52025">
    <property type="entry name" value="PA domain"/>
    <property type="match status" value="1"/>
</dbReference>
<proteinExistence type="evidence at transcript level"/>
<evidence type="ECO:0000250" key="1">
    <source>
        <dbReference type="UniProtKB" id="Q9BSG0"/>
    </source>
</evidence>
<evidence type="ECO:0000255" key="2"/>
<evidence type="ECO:0000305" key="3">
    <source>
    </source>
</evidence>
<keyword id="KW-0325">Glycoprotein</keyword>
<keyword id="KW-1185">Reference proteome</keyword>
<keyword id="KW-0964">Secreted</keyword>
<keyword id="KW-0732">Signal</keyword>
<feature type="signal peptide" evidence="2">
    <location>
        <begin position="1"/>
        <end position="18"/>
    </location>
</feature>
<feature type="chain" id="PRO_0000022000" description="PRADC1-like protein">
    <location>
        <begin position="19"/>
        <end position="196"/>
    </location>
</feature>
<feature type="domain" description="PA">
    <location>
        <begin position="73"/>
        <end position="171"/>
    </location>
</feature>
<feature type="glycosylation site" description="N-linked (GlcNAc...) asparagine" evidence="2">
    <location>
        <position position="179"/>
    </location>
</feature>